<keyword id="KW-0007">Acetylation</keyword>
<keyword id="KW-0963">Cytoplasm</keyword>
<keyword id="KW-0539">Nucleus</keyword>
<keyword id="KW-0597">Phosphoprotein</keyword>
<keyword id="KW-1185">Reference proteome</keyword>
<name>IGO2_YEAST</name>
<accession>Q9P305</accession>
<accession>D3DL81</accession>
<comment type="function">
    <text evidence="4">Required for TORC1 to properly control gene expression and chronological life span. Plays an essential role in initiation of the G0 program by preventing the degradation of specific nutrient-regulated mRNAs via the 5'-3' mRNA decay pathway.</text>
</comment>
<comment type="subcellular location">
    <subcellularLocation>
        <location evidence="2">Cytoplasm</location>
    </subcellularLocation>
    <subcellularLocation>
        <location evidence="2">Nucleus</location>
    </subcellularLocation>
</comment>
<comment type="PTM">
    <text evidence="4">Phosphorylated by RIM15.</text>
</comment>
<comment type="miscellaneous">
    <text evidence="3">Present with 1400 molecules/cell in log phase SD medium.</text>
</comment>
<comment type="similarity">
    <text evidence="5">Belongs to the endosulfine family.</text>
</comment>
<reference key="1">
    <citation type="journal article" date="1994" name="Science">
        <title>Complete nucleotide sequence of Saccharomyces cerevisiae chromosome VIII.</title>
        <authorList>
            <person name="Johnston M."/>
            <person name="Andrews S."/>
            <person name="Brinkman R."/>
            <person name="Cooper J."/>
            <person name="Ding H."/>
            <person name="Dover J."/>
            <person name="Du Z."/>
            <person name="Favello A."/>
            <person name="Fulton L."/>
            <person name="Gattung S."/>
            <person name="Geisel C."/>
            <person name="Kirsten J."/>
            <person name="Kucaba T."/>
            <person name="Hillier L.W."/>
            <person name="Jier M."/>
            <person name="Johnston L."/>
            <person name="Langston Y."/>
            <person name="Latreille P."/>
            <person name="Louis E.J."/>
            <person name="Macri C."/>
            <person name="Mardis E."/>
            <person name="Menezes S."/>
            <person name="Mouser L."/>
            <person name="Nhan M."/>
            <person name="Rifkin L."/>
            <person name="Riles L."/>
            <person name="St Peter H."/>
            <person name="Trevaskis E."/>
            <person name="Vaughan K."/>
            <person name="Vignati D."/>
            <person name="Wilcox L."/>
            <person name="Wohldman P."/>
            <person name="Waterston R."/>
            <person name="Wilson R."/>
            <person name="Vaudin M."/>
        </authorList>
    </citation>
    <scope>NUCLEOTIDE SEQUENCE [LARGE SCALE GENOMIC DNA]</scope>
    <source>
        <strain>ATCC 204508 / S288c</strain>
    </source>
</reference>
<reference key="2">
    <citation type="journal article" date="2014" name="G3 (Bethesda)">
        <title>The reference genome sequence of Saccharomyces cerevisiae: Then and now.</title>
        <authorList>
            <person name="Engel S.R."/>
            <person name="Dietrich F.S."/>
            <person name="Fisk D.G."/>
            <person name="Binkley G."/>
            <person name="Balakrishnan R."/>
            <person name="Costanzo M.C."/>
            <person name="Dwight S.S."/>
            <person name="Hitz B.C."/>
            <person name="Karra K."/>
            <person name="Nash R.S."/>
            <person name="Weng S."/>
            <person name="Wong E.D."/>
            <person name="Lloyd P."/>
            <person name="Skrzypek M.S."/>
            <person name="Miyasato S.R."/>
            <person name="Simison M."/>
            <person name="Cherry J.M."/>
        </authorList>
    </citation>
    <scope>GENOME REANNOTATION</scope>
    <source>
        <strain>ATCC 204508 / S288c</strain>
    </source>
</reference>
<reference key="3">
    <citation type="journal article" date="2003" name="Nature">
        <title>Global analysis of protein localization in budding yeast.</title>
        <authorList>
            <person name="Huh W.-K."/>
            <person name="Falvo J.V."/>
            <person name="Gerke L.C."/>
            <person name="Carroll A.S."/>
            <person name="Howson R.W."/>
            <person name="Weissman J.S."/>
            <person name="O'Shea E.K."/>
        </authorList>
    </citation>
    <scope>SUBCELLULAR LOCATION [LARGE SCALE ANALYSIS]</scope>
</reference>
<reference key="4">
    <citation type="journal article" date="2003" name="Nature">
        <title>Global analysis of protein expression in yeast.</title>
        <authorList>
            <person name="Ghaemmaghami S."/>
            <person name="Huh W.-K."/>
            <person name="Bower K."/>
            <person name="Howson R.W."/>
            <person name="Belle A."/>
            <person name="Dephoure N."/>
            <person name="O'Shea E.K."/>
            <person name="Weissman J.S."/>
        </authorList>
    </citation>
    <scope>LEVEL OF PROTEIN EXPRESSION [LARGE SCALE ANALYSIS]</scope>
</reference>
<reference key="5">
    <citation type="journal article" date="2007" name="Proc. Natl. Acad. Sci. U.S.A.">
        <title>Analysis of phosphorylation sites on proteins from Saccharomyces cerevisiae by electron transfer dissociation (ETD) mass spectrometry.</title>
        <authorList>
            <person name="Chi A."/>
            <person name="Huttenhower C."/>
            <person name="Geer L.Y."/>
            <person name="Coon J.J."/>
            <person name="Syka J.E.P."/>
            <person name="Bai D.L."/>
            <person name="Shabanowitz J."/>
            <person name="Burke D.J."/>
            <person name="Troyanskaya O.G."/>
            <person name="Hunt D.F."/>
        </authorList>
    </citation>
    <scope>PHOSPHORYLATION [LARGE SCALE ANALYSIS] AT SER-63</scope>
    <scope>IDENTIFICATION BY MASS SPECTROMETRY [LARGE SCALE ANALYSIS]</scope>
</reference>
<reference key="6">
    <citation type="journal article" date="2008" name="Mol. Cell. Proteomics">
        <title>A multidimensional chromatography technology for in-depth phosphoproteome analysis.</title>
        <authorList>
            <person name="Albuquerque C.P."/>
            <person name="Smolka M.B."/>
            <person name="Payne S.H."/>
            <person name="Bafna V."/>
            <person name="Eng J."/>
            <person name="Zhou H."/>
        </authorList>
    </citation>
    <scope>PHOSPHORYLATION [LARGE SCALE ANALYSIS] AT SER-6</scope>
    <scope>IDENTIFICATION BY MASS SPECTROMETRY [LARGE SCALE ANALYSIS]</scope>
</reference>
<reference key="7">
    <citation type="journal article" date="2009" name="Science">
        <title>Global analysis of Cdk1 substrate phosphorylation sites provides insights into evolution.</title>
        <authorList>
            <person name="Holt L.J."/>
            <person name="Tuch B.B."/>
            <person name="Villen J."/>
            <person name="Johnson A.D."/>
            <person name="Gygi S.P."/>
            <person name="Morgan D.O."/>
        </authorList>
    </citation>
    <scope>PHOSPHORYLATION [LARGE SCALE ANALYSIS] AT SER-63; SER-108 AND SER-119</scope>
    <scope>IDENTIFICATION BY MASS SPECTROMETRY [LARGE SCALE ANALYSIS]</scope>
</reference>
<reference key="8">
    <citation type="journal article" date="2010" name="Mol. Cell">
        <title>Initiation of the TORC1-regulated G0 program requires Igo1/2, which license specific mRNAs to evade degradation via the 5'-3' mRNA decay pathway.</title>
        <authorList>
            <person name="Talarek N."/>
            <person name="Cameroni E."/>
            <person name="Jaquenoud M."/>
            <person name="Luo X."/>
            <person name="Bontron S."/>
            <person name="Lippman S."/>
            <person name="Devgan G."/>
            <person name="Snyder M."/>
            <person name="Broach J.R."/>
            <person name="De Virgilio C."/>
        </authorList>
    </citation>
    <scope>PHOSPHORYLATION</scope>
    <scope>FUNCTION</scope>
</reference>
<reference key="9">
    <citation type="journal article" date="2012" name="Proc. Natl. Acad. Sci. U.S.A.">
        <title>N-terminal acetylome analyses and functional insights of the N-terminal acetyltransferase NatB.</title>
        <authorList>
            <person name="Van Damme P."/>
            <person name="Lasa M."/>
            <person name="Polevoda B."/>
            <person name="Gazquez C."/>
            <person name="Elosegui-Artola A."/>
            <person name="Kim D.S."/>
            <person name="De Juan-Pardo E."/>
            <person name="Demeyer K."/>
            <person name="Hole K."/>
            <person name="Larrea E."/>
            <person name="Timmerman E."/>
            <person name="Prieto J."/>
            <person name="Arnesen T."/>
            <person name="Sherman F."/>
            <person name="Gevaert K."/>
            <person name="Aldabe R."/>
        </authorList>
    </citation>
    <scope>ACETYLATION [LARGE SCALE ANALYSIS] AT SER-2</scope>
    <scope>CLEAVAGE OF INITIATOR METHIONINE [LARGE SCALE ANALYSIS]</scope>
    <scope>IDENTIFICATION BY MASS SPECTROMETRY [LARGE SCALE ANALYSIS]</scope>
</reference>
<sequence length="131" mass="14395">MSEDLSPTSSRVDLSNPHGFTKEGVDLSKLSPQELKLYKMYGKLPSKKDLLRHKMQDRQYFDSGDYALKKAGVIKSDDVIVNNSSNNLPVTNPSGLRESIIRRRMSSSSGGDSISRQGSISSGPPPRSPNK</sequence>
<gene>
    <name type="primary">IGO2</name>
    <name type="ordered locus">YHR132W-A</name>
</gene>
<protein>
    <recommendedName>
        <fullName>mRNA stability protein IGO2</fullName>
    </recommendedName>
    <alternativeName>
        <fullName>Initiation of G zero protein 2</fullName>
    </alternativeName>
</protein>
<dbReference type="EMBL" id="U10398">
    <property type="protein sequence ID" value="AAF28366.1"/>
    <property type="molecule type" value="Genomic_DNA"/>
</dbReference>
<dbReference type="EMBL" id="BK006934">
    <property type="protein sequence ID" value="DAA06825.1"/>
    <property type="molecule type" value="Genomic_DNA"/>
</dbReference>
<dbReference type="RefSeq" id="NP_036194.1">
    <property type="nucleotide sequence ID" value="NM_001184441.1"/>
</dbReference>
<dbReference type="BioGRID" id="36565">
    <property type="interactions" value="98"/>
</dbReference>
<dbReference type="FunCoup" id="Q9P305">
    <property type="interactions" value="34"/>
</dbReference>
<dbReference type="IntAct" id="Q9P305">
    <property type="interactions" value="3"/>
</dbReference>
<dbReference type="STRING" id="4932.YHR132W-A"/>
<dbReference type="iPTMnet" id="Q9P305"/>
<dbReference type="PaxDb" id="4932-YHR132W-A"/>
<dbReference type="PeptideAtlas" id="Q9P305"/>
<dbReference type="EnsemblFungi" id="YHR132W-A_mRNA">
    <property type="protein sequence ID" value="YHR132W-A"/>
    <property type="gene ID" value="YHR132W-A"/>
</dbReference>
<dbReference type="GeneID" id="856534"/>
<dbReference type="KEGG" id="sce:YHR132W-A"/>
<dbReference type="AGR" id="SGD:S000007496"/>
<dbReference type="SGD" id="S000007496">
    <property type="gene designation" value="IGO2"/>
</dbReference>
<dbReference type="VEuPathDB" id="FungiDB:YHR132W-A"/>
<dbReference type="eggNOG" id="KOG4076">
    <property type="taxonomic scope" value="Eukaryota"/>
</dbReference>
<dbReference type="GeneTree" id="ENSGT00940000174856"/>
<dbReference type="HOGENOM" id="CLU_135184_0_0_1"/>
<dbReference type="InParanoid" id="Q9P305"/>
<dbReference type="OMA" id="MQERKYF"/>
<dbReference type="OrthoDB" id="5949865at2759"/>
<dbReference type="BioCyc" id="YEAST:G3O-31264-MONOMER"/>
<dbReference type="Reactome" id="R-SCE-2465910">
    <property type="pathway name" value="MASTL Facilitates Mitotic Progression"/>
</dbReference>
<dbReference type="BioGRID-ORCS" id="856534">
    <property type="hits" value="0 hits in 10 CRISPR screens"/>
</dbReference>
<dbReference type="PRO" id="PR:Q9P305"/>
<dbReference type="Proteomes" id="UP000002311">
    <property type="component" value="Chromosome VIII"/>
</dbReference>
<dbReference type="RNAct" id="Q9P305">
    <property type="molecule type" value="protein"/>
</dbReference>
<dbReference type="GO" id="GO:0005737">
    <property type="term" value="C:cytoplasm"/>
    <property type="evidence" value="ECO:0007005"/>
    <property type="project" value="SGD"/>
</dbReference>
<dbReference type="GO" id="GO:0005634">
    <property type="term" value="C:nucleus"/>
    <property type="evidence" value="ECO:0007005"/>
    <property type="project" value="SGD"/>
</dbReference>
<dbReference type="GO" id="GO:0004864">
    <property type="term" value="F:protein phosphatase inhibitor activity"/>
    <property type="evidence" value="ECO:0000318"/>
    <property type="project" value="GO_Central"/>
</dbReference>
<dbReference type="GO" id="GO:0044877">
    <property type="term" value="F:protein-containing complex binding"/>
    <property type="evidence" value="ECO:0000314"/>
    <property type="project" value="SGD"/>
</dbReference>
<dbReference type="GO" id="GO:0034605">
    <property type="term" value="P:cellular response to heat"/>
    <property type="evidence" value="ECO:0000316"/>
    <property type="project" value="SGD"/>
</dbReference>
<dbReference type="GO" id="GO:1900152">
    <property type="term" value="P:negative regulation of nuclear-transcribed mRNA catabolic process, deadenylation-dependent decay"/>
    <property type="evidence" value="ECO:0000316"/>
    <property type="project" value="SGD"/>
</dbReference>
<dbReference type="GO" id="GO:1903452">
    <property type="term" value="P:positive regulation of G1 to G0 transition"/>
    <property type="evidence" value="ECO:0000316"/>
    <property type="project" value="SGD"/>
</dbReference>
<dbReference type="GO" id="GO:1901992">
    <property type="term" value="P:positive regulation of mitotic cell cycle phase transition"/>
    <property type="evidence" value="ECO:0000316"/>
    <property type="project" value="SGD"/>
</dbReference>
<dbReference type="InterPro" id="IPR006760">
    <property type="entry name" value="Endosulphine"/>
</dbReference>
<dbReference type="PANTHER" id="PTHR10358">
    <property type="entry name" value="ENDOSULFINE"/>
    <property type="match status" value="1"/>
</dbReference>
<dbReference type="PANTHER" id="PTHR10358:SF6">
    <property type="entry name" value="ENDOSULFINE, ISOFORM A"/>
    <property type="match status" value="1"/>
</dbReference>
<dbReference type="Pfam" id="PF04667">
    <property type="entry name" value="Endosulfine"/>
    <property type="match status" value="1"/>
</dbReference>
<feature type="initiator methionine" description="Removed" evidence="9">
    <location>
        <position position="1"/>
    </location>
</feature>
<feature type="chain" id="PRO_0000245365" description="mRNA stability protein IGO2">
    <location>
        <begin position="2"/>
        <end position="131"/>
    </location>
</feature>
<feature type="region of interest" description="Disordered" evidence="1">
    <location>
        <begin position="1"/>
        <end position="26"/>
    </location>
</feature>
<feature type="region of interest" description="Disordered" evidence="1">
    <location>
        <begin position="81"/>
        <end position="131"/>
    </location>
</feature>
<feature type="compositionally biased region" description="Polar residues" evidence="1">
    <location>
        <begin position="1"/>
        <end position="13"/>
    </location>
</feature>
<feature type="compositionally biased region" description="Low complexity" evidence="1">
    <location>
        <begin position="106"/>
        <end position="122"/>
    </location>
</feature>
<feature type="modified residue" description="N-acetylserine" evidence="9">
    <location>
        <position position="2"/>
    </location>
</feature>
<feature type="modified residue" description="Phosphoserine" evidence="7">
    <location>
        <position position="6"/>
    </location>
</feature>
<feature type="modified residue" description="Phosphoserine" evidence="6 8">
    <location>
        <position position="63"/>
    </location>
</feature>
<feature type="modified residue" description="Phosphoserine" evidence="8">
    <location>
        <position position="108"/>
    </location>
</feature>
<feature type="modified residue" description="Phosphoserine" evidence="8">
    <location>
        <position position="119"/>
    </location>
</feature>
<evidence type="ECO:0000256" key="1">
    <source>
        <dbReference type="SAM" id="MobiDB-lite"/>
    </source>
</evidence>
<evidence type="ECO:0000269" key="2">
    <source>
    </source>
</evidence>
<evidence type="ECO:0000269" key="3">
    <source>
    </source>
</evidence>
<evidence type="ECO:0000269" key="4">
    <source>
    </source>
</evidence>
<evidence type="ECO:0000305" key="5"/>
<evidence type="ECO:0007744" key="6">
    <source>
    </source>
</evidence>
<evidence type="ECO:0007744" key="7">
    <source>
    </source>
</evidence>
<evidence type="ECO:0007744" key="8">
    <source>
    </source>
</evidence>
<evidence type="ECO:0007744" key="9">
    <source>
    </source>
</evidence>
<proteinExistence type="evidence at protein level"/>
<organism>
    <name type="scientific">Saccharomyces cerevisiae (strain ATCC 204508 / S288c)</name>
    <name type="common">Baker's yeast</name>
    <dbReference type="NCBI Taxonomy" id="559292"/>
    <lineage>
        <taxon>Eukaryota</taxon>
        <taxon>Fungi</taxon>
        <taxon>Dikarya</taxon>
        <taxon>Ascomycota</taxon>
        <taxon>Saccharomycotina</taxon>
        <taxon>Saccharomycetes</taxon>
        <taxon>Saccharomycetales</taxon>
        <taxon>Saccharomycetaceae</taxon>
        <taxon>Saccharomyces</taxon>
    </lineage>
</organism>